<feature type="chain" id="PRO_0000305317" description="Probable RNA-binding protein 46">
    <location>
        <begin position="1"/>
        <end position="510"/>
    </location>
</feature>
<feature type="domain" description="RRM 1" evidence="2">
    <location>
        <begin position="45"/>
        <end position="123"/>
    </location>
</feature>
<feature type="domain" description="RRM 2" evidence="2">
    <location>
        <begin position="125"/>
        <end position="207"/>
    </location>
</feature>
<feature type="domain" description="RRM 3" evidence="2">
    <location>
        <begin position="220"/>
        <end position="292"/>
    </location>
</feature>
<feature type="region of interest" description="Disordered" evidence="3">
    <location>
        <begin position="23"/>
        <end position="42"/>
    </location>
</feature>
<feature type="compositionally biased region" description="Pro residues" evidence="3">
    <location>
        <begin position="31"/>
        <end position="42"/>
    </location>
</feature>
<feature type="splice variant" id="VSP_061946" description="In isoform 2." evidence="5">
    <original>M</original>
    <variation>MDERSSQPSDNSRM</variation>
    <location>
        <position position="1"/>
    </location>
</feature>
<dbReference type="EMBL" id="BC124720">
    <property type="protein sequence ID" value="AAI24721.1"/>
    <property type="molecule type" value="mRNA"/>
</dbReference>
<dbReference type="EMBL" id="CU861508">
    <property type="status" value="NOT_ANNOTATED_CDS"/>
    <property type="molecule type" value="Genomic_DNA"/>
</dbReference>
<dbReference type="RefSeq" id="NP_001073493.2">
    <property type="nucleotide sequence ID" value="NM_001080024.2"/>
</dbReference>
<dbReference type="SMR" id="Q08BH5"/>
<dbReference type="FunCoup" id="Q08BH5">
    <property type="interactions" value="171"/>
</dbReference>
<dbReference type="STRING" id="7955.ENSDARP00000099341"/>
<dbReference type="PaxDb" id="7955-ENSDARP00000099341"/>
<dbReference type="GeneID" id="566042"/>
<dbReference type="KEGG" id="dre:566042"/>
<dbReference type="AGR" id="ZFIN:ZDB-GENE-061013-298"/>
<dbReference type="CTD" id="166863"/>
<dbReference type="ZFIN" id="ZDB-GENE-061013-298">
    <property type="gene designation" value="rbm46"/>
</dbReference>
<dbReference type="eggNOG" id="KOG0117">
    <property type="taxonomic scope" value="Eukaryota"/>
</dbReference>
<dbReference type="InParanoid" id="Q08BH5"/>
<dbReference type="OrthoDB" id="3800936at2759"/>
<dbReference type="PhylomeDB" id="Q08BH5"/>
<dbReference type="PRO" id="PR:Q08BH5"/>
<dbReference type="Proteomes" id="UP000000437">
    <property type="component" value="Chromosome 1"/>
</dbReference>
<dbReference type="GO" id="GO:0005737">
    <property type="term" value="C:cytoplasm"/>
    <property type="evidence" value="ECO:0000250"/>
    <property type="project" value="UniProtKB"/>
</dbReference>
<dbReference type="GO" id="GO:0005634">
    <property type="term" value="C:nucleus"/>
    <property type="evidence" value="ECO:0000318"/>
    <property type="project" value="GO_Central"/>
</dbReference>
<dbReference type="GO" id="GO:0003729">
    <property type="term" value="F:mRNA binding"/>
    <property type="evidence" value="ECO:0000318"/>
    <property type="project" value="GO_Central"/>
</dbReference>
<dbReference type="GO" id="GO:0051321">
    <property type="term" value="P:meiotic cell cycle"/>
    <property type="evidence" value="ECO:0007669"/>
    <property type="project" value="UniProtKB-KW"/>
</dbReference>
<dbReference type="GO" id="GO:0048477">
    <property type="term" value="P:oogenesis"/>
    <property type="evidence" value="ECO:0007669"/>
    <property type="project" value="UniProtKB-KW"/>
</dbReference>
<dbReference type="GO" id="GO:0007283">
    <property type="term" value="P:spermatogenesis"/>
    <property type="evidence" value="ECO:0007669"/>
    <property type="project" value="UniProtKB-KW"/>
</dbReference>
<dbReference type="CDD" id="cd12484">
    <property type="entry name" value="RRM1_RBM46"/>
    <property type="match status" value="1"/>
</dbReference>
<dbReference type="CDD" id="cd12492">
    <property type="entry name" value="RRM2_RBM46"/>
    <property type="match status" value="1"/>
</dbReference>
<dbReference type="CDD" id="cd12498">
    <property type="entry name" value="RRM3_ACF"/>
    <property type="match status" value="1"/>
</dbReference>
<dbReference type="FunFam" id="3.30.70.330:FF:000022">
    <property type="entry name" value="APOBEC1 complementation factor isoform X1"/>
    <property type="match status" value="1"/>
</dbReference>
<dbReference type="FunFam" id="3.30.70.330:FF:000026">
    <property type="entry name" value="APOBEC1 complementation factor isoform X1"/>
    <property type="match status" value="1"/>
</dbReference>
<dbReference type="FunFam" id="3.30.70.330:FF:000027">
    <property type="entry name" value="Heterogeneous nuclear ribonucleoprotein q isoform"/>
    <property type="match status" value="1"/>
</dbReference>
<dbReference type="FunFam" id="3.30.160.20:FF:000138">
    <property type="entry name" value="Probable RNA-binding protein 46"/>
    <property type="match status" value="1"/>
</dbReference>
<dbReference type="Gene3D" id="3.30.160.20">
    <property type="match status" value="1"/>
</dbReference>
<dbReference type="Gene3D" id="3.30.70.330">
    <property type="match status" value="3"/>
</dbReference>
<dbReference type="InterPro" id="IPR006535">
    <property type="entry name" value="HnRNP_R/Q_splicing_fac"/>
</dbReference>
<dbReference type="InterPro" id="IPR012677">
    <property type="entry name" value="Nucleotide-bd_a/b_plait_sf"/>
</dbReference>
<dbReference type="InterPro" id="IPR035979">
    <property type="entry name" value="RBD_domain_sf"/>
</dbReference>
<dbReference type="InterPro" id="IPR034434">
    <property type="entry name" value="RBM46_RRM1"/>
</dbReference>
<dbReference type="InterPro" id="IPR034435">
    <property type="entry name" value="RBM46_RRM2"/>
</dbReference>
<dbReference type="InterPro" id="IPR000504">
    <property type="entry name" value="RRM_dom"/>
</dbReference>
<dbReference type="NCBIfam" id="TIGR01648">
    <property type="entry name" value="hnRNP-R-Q"/>
    <property type="match status" value="1"/>
</dbReference>
<dbReference type="PANTHER" id="PTHR21245">
    <property type="entry name" value="HETEROGENEOUS NUCLEAR RIBONUCLEOPROTEIN"/>
    <property type="match status" value="1"/>
</dbReference>
<dbReference type="Pfam" id="PF14709">
    <property type="entry name" value="DND1_DSRM"/>
    <property type="match status" value="1"/>
</dbReference>
<dbReference type="Pfam" id="PF00076">
    <property type="entry name" value="RRM_1"/>
    <property type="match status" value="3"/>
</dbReference>
<dbReference type="SMART" id="SM00360">
    <property type="entry name" value="RRM"/>
    <property type="match status" value="3"/>
</dbReference>
<dbReference type="SUPFAM" id="SSF54768">
    <property type="entry name" value="dsRNA-binding domain-like"/>
    <property type="match status" value="1"/>
</dbReference>
<dbReference type="SUPFAM" id="SSF54928">
    <property type="entry name" value="RNA-binding domain, RBD"/>
    <property type="match status" value="3"/>
</dbReference>
<dbReference type="PROSITE" id="PS50102">
    <property type="entry name" value="RRM"/>
    <property type="match status" value="3"/>
</dbReference>
<accession>Q08BH5</accession>
<organism>
    <name type="scientific">Danio rerio</name>
    <name type="common">Zebrafish</name>
    <name type="synonym">Brachydanio rerio</name>
    <dbReference type="NCBI Taxonomy" id="7955"/>
    <lineage>
        <taxon>Eukaryota</taxon>
        <taxon>Metazoa</taxon>
        <taxon>Chordata</taxon>
        <taxon>Craniata</taxon>
        <taxon>Vertebrata</taxon>
        <taxon>Euteleostomi</taxon>
        <taxon>Actinopterygii</taxon>
        <taxon>Neopterygii</taxon>
        <taxon>Teleostei</taxon>
        <taxon>Ostariophysi</taxon>
        <taxon>Cypriniformes</taxon>
        <taxon>Danionidae</taxon>
        <taxon>Danioninae</taxon>
        <taxon>Danio</taxon>
    </lineage>
</organism>
<proteinExistence type="evidence at transcript level"/>
<reference key="1">
    <citation type="submission" date="2006-10" db="EMBL/GenBank/DDBJ databases">
        <authorList>
            <consortium name="NIH - Zebrafish Gene Collection (ZGC) project"/>
        </authorList>
    </citation>
    <scope>NUCLEOTIDE SEQUENCE [LARGE SCALE MRNA] (ISOFORM 1)</scope>
    <source>
        <tissue>Ovary</tissue>
    </source>
</reference>
<reference key="2">
    <citation type="journal article" date="2013" name="Nature">
        <title>The zebrafish reference genome sequence and its relationship to the human genome.</title>
        <authorList>
            <person name="Howe K."/>
            <person name="Clark M.D."/>
            <person name="Torroja C.F."/>
            <person name="Torrance J."/>
            <person name="Berthelot C."/>
            <person name="Muffato M."/>
            <person name="Collins J.E."/>
            <person name="Humphray S."/>
            <person name="McLaren K."/>
            <person name="Matthews L."/>
            <person name="McLaren S."/>
            <person name="Sealy I."/>
            <person name="Caccamo M."/>
            <person name="Churcher C."/>
            <person name="Scott C."/>
            <person name="Barrett J.C."/>
            <person name="Koch R."/>
            <person name="Rauch G.J."/>
            <person name="White S."/>
            <person name="Chow W."/>
            <person name="Kilian B."/>
            <person name="Quintais L.T."/>
            <person name="Guerra-Assuncao J.A."/>
            <person name="Zhou Y."/>
            <person name="Gu Y."/>
            <person name="Yen J."/>
            <person name="Vogel J.H."/>
            <person name="Eyre T."/>
            <person name="Redmond S."/>
            <person name="Banerjee R."/>
            <person name="Chi J."/>
            <person name="Fu B."/>
            <person name="Langley E."/>
            <person name="Maguire S.F."/>
            <person name="Laird G.K."/>
            <person name="Lloyd D."/>
            <person name="Kenyon E."/>
            <person name="Donaldson S."/>
            <person name="Sehra H."/>
            <person name="Almeida-King J."/>
            <person name="Loveland J."/>
            <person name="Trevanion S."/>
            <person name="Jones M."/>
            <person name="Quail M."/>
            <person name="Willey D."/>
            <person name="Hunt A."/>
            <person name="Burton J."/>
            <person name="Sims S."/>
            <person name="McLay K."/>
            <person name="Plumb B."/>
            <person name="Davis J."/>
            <person name="Clee C."/>
            <person name="Oliver K."/>
            <person name="Clark R."/>
            <person name="Riddle C."/>
            <person name="Elliot D."/>
            <person name="Threadgold G."/>
            <person name="Harden G."/>
            <person name="Ware D."/>
            <person name="Begum S."/>
            <person name="Mortimore B."/>
            <person name="Kerry G."/>
            <person name="Heath P."/>
            <person name="Phillimore B."/>
            <person name="Tracey A."/>
            <person name="Corby N."/>
            <person name="Dunn M."/>
            <person name="Johnson C."/>
            <person name="Wood J."/>
            <person name="Clark S."/>
            <person name="Pelan S."/>
            <person name="Griffiths G."/>
            <person name="Smith M."/>
            <person name="Glithero R."/>
            <person name="Howden P."/>
            <person name="Barker N."/>
            <person name="Lloyd C."/>
            <person name="Stevens C."/>
            <person name="Harley J."/>
            <person name="Holt K."/>
            <person name="Panagiotidis G."/>
            <person name="Lovell J."/>
            <person name="Beasley H."/>
            <person name="Henderson C."/>
            <person name="Gordon D."/>
            <person name="Auger K."/>
            <person name="Wright D."/>
            <person name="Collins J."/>
            <person name="Raisen C."/>
            <person name="Dyer L."/>
            <person name="Leung K."/>
            <person name="Robertson L."/>
            <person name="Ambridge K."/>
            <person name="Leongamornlert D."/>
            <person name="McGuire S."/>
            <person name="Gilderthorp R."/>
            <person name="Griffiths C."/>
            <person name="Manthravadi D."/>
            <person name="Nichol S."/>
            <person name="Barker G."/>
            <person name="Whitehead S."/>
            <person name="Kay M."/>
            <person name="Brown J."/>
            <person name="Murnane C."/>
            <person name="Gray E."/>
            <person name="Humphries M."/>
            <person name="Sycamore N."/>
            <person name="Barker D."/>
            <person name="Saunders D."/>
            <person name="Wallis J."/>
            <person name="Babbage A."/>
            <person name="Hammond S."/>
            <person name="Mashreghi-Mohammadi M."/>
            <person name="Barr L."/>
            <person name="Martin S."/>
            <person name="Wray P."/>
            <person name="Ellington A."/>
            <person name="Matthews N."/>
            <person name="Ellwood M."/>
            <person name="Woodmansey R."/>
            <person name="Clark G."/>
            <person name="Cooper J."/>
            <person name="Tromans A."/>
            <person name="Grafham D."/>
            <person name="Skuce C."/>
            <person name="Pandian R."/>
            <person name="Andrews R."/>
            <person name="Harrison E."/>
            <person name="Kimberley A."/>
            <person name="Garnett J."/>
            <person name="Fosker N."/>
            <person name="Hall R."/>
            <person name="Garner P."/>
            <person name="Kelly D."/>
            <person name="Bird C."/>
            <person name="Palmer S."/>
            <person name="Gehring I."/>
            <person name="Berger A."/>
            <person name="Dooley C.M."/>
            <person name="Ersan-Urun Z."/>
            <person name="Eser C."/>
            <person name="Geiger H."/>
            <person name="Geisler M."/>
            <person name="Karotki L."/>
            <person name="Kirn A."/>
            <person name="Konantz J."/>
            <person name="Konantz M."/>
            <person name="Oberlander M."/>
            <person name="Rudolph-Geiger S."/>
            <person name="Teucke M."/>
            <person name="Lanz C."/>
            <person name="Raddatz G."/>
            <person name="Osoegawa K."/>
            <person name="Zhu B."/>
            <person name="Rapp A."/>
            <person name="Widaa S."/>
            <person name="Langford C."/>
            <person name="Yang F."/>
            <person name="Schuster S.C."/>
            <person name="Carter N.P."/>
            <person name="Harrow J."/>
            <person name="Ning Z."/>
            <person name="Herrero J."/>
            <person name="Searle S.M."/>
            <person name="Enright A."/>
            <person name="Geisler R."/>
            <person name="Plasterk R.H."/>
            <person name="Lee C."/>
            <person name="Westerfield M."/>
            <person name="de Jong P.J."/>
            <person name="Zon L.I."/>
            <person name="Postlethwait J.H."/>
            <person name="Nusslein-Volhard C."/>
            <person name="Hubbard T.J."/>
            <person name="Roest Crollius H."/>
            <person name="Rogers J."/>
            <person name="Stemple D.L."/>
        </authorList>
    </citation>
    <scope>NUCLEOTIDE SEQUENCE [LARGE SCALE GENOMIC DNA]</scope>
    <source>
        <strain>Tuebingen</strain>
    </source>
</reference>
<reference key="3">
    <citation type="journal article" date="2021" name="Biol. Reprod.">
        <title>Rbm46, a novel germ cell-specific factor, modulates meiotic progression and spermatogenesis.</title>
        <authorList>
            <person name="Dai X."/>
            <person name="Cheng X."/>
            <person name="Huang J."/>
            <person name="Gao Y."/>
            <person name="Wang D."/>
            <person name="Feng Z."/>
            <person name="Zhai G."/>
            <person name="Lou Q."/>
            <person name="He J."/>
            <person name="Wang Z."/>
            <person name="Yin Z."/>
        </authorList>
    </citation>
    <scope>FUNCTION</scope>
    <scope>DISRUPTION PHENOTYPE</scope>
    <scope>ALTERNATIVE SPLICING (ISOFORMS 1 AND 2)</scope>
    <scope>TISSUE SPECIFICITY (ISOFORMS 1 AND 2)</scope>
</reference>
<keyword id="KW-0025">Alternative splicing</keyword>
<keyword id="KW-0963">Cytoplasm</keyword>
<keyword id="KW-0221">Differentiation</keyword>
<keyword id="KW-0469">Meiosis</keyword>
<keyword id="KW-0896">Oogenesis</keyword>
<keyword id="KW-1185">Reference proteome</keyword>
<keyword id="KW-0677">Repeat</keyword>
<keyword id="KW-0694">RNA-binding</keyword>
<keyword id="KW-0744">Spermatogenesis</keyword>
<gene>
    <name type="primary">rbm46</name>
    <name type="ORF">zgc:153695</name>
</gene>
<sequence>MDSSKEAALLALMDRTGYSMVQENGQRKFGGPPPGWEGPPPPRGREVFVGKIPRDMYEDELVPVFEQAGHIYEFRLMMEFSGENRGYAFVMYTTREKAQRAIQLLDNYEIRPGKFIGVCVSLDNCRLFIGSIPKDKKKEEIQEEMMKVTEGVMDVIVYPSAVDRMKNRGFAFVEYESHKAAAMARRKLIPGTFQLWGHTIQVDWAEPEKELDEETMQRVRVLYVRNLMLSTTEETLRSEFSQLKPGSVERVKKLTDYAFIHFYNREDALTALESMNGKVIDGSPIEVTLAKPASKDGNKRFGPRNCHNGVTAAGGYGDSNFLFRTRNDMTIGAMGNGLNAHALSLPYAVDLDRCVYPFLPGSTLVPVSLNTVKPSQLSSAVSLLDYYCHKNDWSLPEYHLYSLAGQEGKVMLIYKVVISSTRRSFMPDKVCTILEDAKELAAQNALWNLDCSSGSSLNVSPPAPSGSGFLSFGCRSLPYPAYPMASISPPLPISCSSAQRLFIPNQSSFL</sequence>
<name>RBM46_DANRE</name>
<comment type="function">
    <text evidence="4">Essential for male and female fertility, playing a crucial role in regulating germ cell development by ensuring the proper progression of meiosis prophase I.</text>
</comment>
<comment type="subcellular location">
    <subcellularLocation>
        <location evidence="1">Cytoplasm</location>
    </subcellularLocation>
</comment>
<comment type="alternative products">
    <event type="alternative splicing"/>
    <isoform>
        <id>Q08BH5-1</id>
        <name>1</name>
        <name evidence="5">rbm46-201</name>
        <sequence type="displayed"/>
    </isoform>
    <isoform>
        <id>Q08BH5-2</id>
        <name>2</name>
        <name evidence="5">rbm46-203</name>
        <sequence type="described" ref="VSP_061946"/>
    </isoform>
</comment>
<comment type="tissue specificity">
    <molecule>Isoform 1</molecule>
    <text evidence="4">Expressed in the testis and ovary.</text>
</comment>
<comment type="tissue specificity">
    <molecule>Isoform 2</molecule>
    <text evidence="4">Expressed in the testis and ovary.</text>
</comment>
<comment type="disruption phenotype">
    <text evidence="4">TALEN-mediated rbm46 gene inactivation leads to female-male sex reversal during the sex determination stage and infertility with failure of spermatogenesis. The testis of mutant males have germ cells that are almost morphologically identical to spermatogonia or are spermatogonia-like but exhibit almost complete absence of germ cells beyond the spermatogonial stage. Oocytes fail to progress through meiosis to develop juvenile ovaries.</text>
</comment>
<protein>
    <recommendedName>
        <fullName>Probable RNA-binding protein 46</fullName>
    </recommendedName>
    <alternativeName>
        <fullName>RNA-binding motif protein 46</fullName>
    </alternativeName>
</protein>
<evidence type="ECO:0000250" key="1">
    <source>
        <dbReference type="UniProtKB" id="P86049"/>
    </source>
</evidence>
<evidence type="ECO:0000255" key="2">
    <source>
        <dbReference type="PROSITE-ProRule" id="PRU00176"/>
    </source>
</evidence>
<evidence type="ECO:0000256" key="3">
    <source>
        <dbReference type="SAM" id="MobiDB-lite"/>
    </source>
</evidence>
<evidence type="ECO:0000269" key="4">
    <source>
    </source>
</evidence>
<evidence type="ECO:0000303" key="5">
    <source>
    </source>
</evidence>